<evidence type="ECO:0000250" key="1"/>
<evidence type="ECO:0000250" key="2">
    <source>
        <dbReference type="UniProtKB" id="P31353"/>
    </source>
</evidence>
<evidence type="ECO:0000250" key="3">
    <source>
        <dbReference type="UniProtKB" id="Q92871"/>
    </source>
</evidence>
<evidence type="ECO:0000305" key="4"/>
<reference key="1">
    <citation type="journal article" date="1998" name="Science">
        <title>Genome sequence of the nematode C. elegans: a platform for investigating biology.</title>
        <authorList>
            <consortium name="The C. elegans sequencing consortium"/>
        </authorList>
    </citation>
    <scope>NUCLEOTIDE SEQUENCE [LARGE SCALE GENOMIC DNA]</scope>
    <scope>ALTERNATIVE SPLICING</scope>
    <source>
        <strain>Bristol N2</strain>
    </source>
</reference>
<organism>
    <name type="scientific">Caenorhabditis elegans</name>
    <dbReference type="NCBI Taxonomy" id="6239"/>
    <lineage>
        <taxon>Eukaryota</taxon>
        <taxon>Metazoa</taxon>
        <taxon>Ecdysozoa</taxon>
        <taxon>Nematoda</taxon>
        <taxon>Chromadorea</taxon>
        <taxon>Rhabditida</taxon>
        <taxon>Rhabditina</taxon>
        <taxon>Rhabditomorpha</taxon>
        <taxon>Rhabditoidea</taxon>
        <taxon>Rhabditidae</taxon>
        <taxon>Peloderinae</taxon>
        <taxon>Caenorhabditis</taxon>
    </lineage>
</organism>
<feature type="chain" id="PRO_0000199698" description="Probable phosphomannomutase">
    <location>
        <begin position="1"/>
        <end position="254"/>
    </location>
</feature>
<feature type="active site" description="Nucleophile" evidence="3">
    <location>
        <position position="14"/>
    </location>
</feature>
<feature type="active site" description="Proton donor/acceptor" evidence="3">
    <location>
        <position position="16"/>
    </location>
</feature>
<feature type="binding site" evidence="3">
    <location>
        <position position="14"/>
    </location>
    <ligand>
        <name>Mg(2+)</name>
        <dbReference type="ChEBI" id="CHEBI:18420"/>
        <label>1</label>
    </ligand>
</feature>
<feature type="binding site" evidence="3">
    <location>
        <position position="16"/>
    </location>
    <ligand>
        <name>Mg(2+)</name>
        <dbReference type="ChEBI" id="CHEBI:18420"/>
        <label>1</label>
    </ligand>
</feature>
<feature type="binding site" evidence="3">
    <location>
        <position position="23"/>
    </location>
    <ligand>
        <name>alpha-D-mannose 1-phosphate</name>
        <dbReference type="ChEBI" id="CHEBI:58409"/>
    </ligand>
</feature>
<feature type="binding site" evidence="3">
    <location>
        <position position="129"/>
    </location>
    <ligand>
        <name>alpha-D-mannose 1-phosphate</name>
        <dbReference type="ChEBI" id="CHEBI:58409"/>
    </ligand>
</feature>
<feature type="binding site" evidence="3">
    <location>
        <position position="140"/>
    </location>
    <ligand>
        <name>alpha-D-mannose 1-phosphate</name>
        <dbReference type="ChEBI" id="CHEBI:58409"/>
    </ligand>
</feature>
<feature type="binding site" evidence="3">
    <location>
        <position position="147"/>
    </location>
    <ligand>
        <name>alpha-D-mannose 1-phosphate</name>
        <dbReference type="ChEBI" id="CHEBI:58409"/>
    </ligand>
</feature>
<feature type="binding site" evidence="3">
    <location>
        <position position="185"/>
    </location>
    <ligand>
        <name>alpha-D-mannose 1-phosphate</name>
        <dbReference type="ChEBI" id="CHEBI:58409"/>
    </ligand>
</feature>
<feature type="binding site" evidence="3">
    <location>
        <position position="187"/>
    </location>
    <ligand>
        <name>alpha-D-mannose 1-phosphate</name>
        <dbReference type="ChEBI" id="CHEBI:58409"/>
    </ligand>
</feature>
<feature type="binding site" evidence="2">
    <location>
        <position position="214"/>
    </location>
    <ligand>
        <name>Mg(2+)</name>
        <dbReference type="ChEBI" id="CHEBI:18420"/>
        <label>1</label>
    </ligand>
</feature>
<feature type="binding site" evidence="3">
    <location>
        <position position="226"/>
    </location>
    <ligand>
        <name>Mg(2+)</name>
        <dbReference type="ChEBI" id="CHEBI:18420"/>
        <label>2</label>
    </ligand>
</feature>
<feature type="binding site" evidence="3">
    <location>
        <position position="228"/>
    </location>
    <ligand>
        <name>Mg(2+)</name>
        <dbReference type="ChEBI" id="CHEBI:18420"/>
        <label>2</label>
    </ligand>
</feature>
<feature type="binding site" evidence="3">
    <location>
        <position position="231"/>
    </location>
    <ligand>
        <name>Mg(2+)</name>
        <dbReference type="ChEBI" id="CHEBI:18420"/>
        <label>2</label>
    </ligand>
</feature>
<feature type="splice variant" id="VSP_041635" description="In isoform a." evidence="4">
    <location>
        <begin position="1"/>
        <end position="29"/>
    </location>
</feature>
<keyword id="KW-0025">Alternative splicing</keyword>
<keyword id="KW-0963">Cytoplasm</keyword>
<keyword id="KW-0413">Isomerase</keyword>
<keyword id="KW-0460">Magnesium</keyword>
<keyword id="KW-0479">Metal-binding</keyword>
<keyword id="KW-1185">Reference proteome</keyword>
<gene>
    <name type="ORF">F52B11.2</name>
</gene>
<sequence>MTSPASSRTILVFDVDGTLTAARQTITPEMREFLIEARKRVPLAIVGGSDFKKITEQLADHDKDLLLSLFDYTFSENGLYGFKGTEPYPVQSIQKAIGDAKLQELINFALRYMSDIQLPVKRGNFVEFRNGMINLSPIGRSCSQEERMQFVEFDKKHGIRQKFTEQLREKFGQYGLQFAIGGQISVDVFPTGWDKTFCLQYLVPDFDTIHFFGDKTAPGGNDHEIFADERTVGHTVEGPEDTRKHVENVLKELD</sequence>
<name>PMM_CAEEL</name>
<accession>Q9XUE6</accession>
<accession>E3W758</accession>
<protein>
    <recommendedName>
        <fullName>Probable phosphomannomutase</fullName>
        <shortName>PMM</shortName>
        <ecNumber>5.4.2.8</ecNumber>
    </recommendedName>
</protein>
<comment type="function">
    <text evidence="1">Involved in the synthesis of the GDP-mannose and dolichol-phosphate-mannose required for a number of critical mannosyl transfer reactions.</text>
</comment>
<comment type="catalytic activity">
    <reaction>
        <text>alpha-D-mannose 1-phosphate = D-mannose 6-phosphate</text>
        <dbReference type="Rhea" id="RHEA:11140"/>
        <dbReference type="ChEBI" id="CHEBI:58409"/>
        <dbReference type="ChEBI" id="CHEBI:58735"/>
        <dbReference type="EC" id="5.4.2.8"/>
    </reaction>
</comment>
<comment type="pathway">
    <text>Nucleotide-sugar biosynthesis; GDP-alpha-D-mannose biosynthesis; alpha-D-mannose 1-phosphate from D-fructose 6-phosphate: step 2/2.</text>
</comment>
<comment type="subunit">
    <text evidence="1">Homodimer.</text>
</comment>
<comment type="subcellular location">
    <subcellularLocation>
        <location evidence="1">Cytoplasm</location>
    </subcellularLocation>
</comment>
<comment type="alternative products">
    <event type="alternative splicing"/>
    <isoform>
        <id>Q9XUE6-1</id>
        <name>b</name>
        <sequence type="displayed"/>
    </isoform>
    <isoform>
        <id>Q9XUE6-2</id>
        <name>a</name>
        <sequence type="described" ref="VSP_041635"/>
    </isoform>
</comment>
<comment type="similarity">
    <text evidence="4">Belongs to the eukaryotic PMM family.</text>
</comment>
<dbReference type="EC" id="5.4.2.8"/>
<dbReference type="EMBL" id="Z82268">
    <property type="protein sequence ID" value="CAB05198.3"/>
    <property type="molecule type" value="Genomic_DNA"/>
</dbReference>
<dbReference type="EMBL" id="Z82268">
    <property type="protein sequence ID" value="CBX53327.1"/>
    <property type="molecule type" value="Genomic_DNA"/>
</dbReference>
<dbReference type="PIR" id="T22485">
    <property type="entry name" value="T22485"/>
</dbReference>
<dbReference type="RefSeq" id="NP_001255786.1">
    <molecule id="Q9XUE6-1"/>
    <property type="nucleotide sequence ID" value="NM_001268857.2"/>
</dbReference>
<dbReference type="RefSeq" id="NP_001255787.1">
    <molecule id="Q9XUE6-2"/>
    <property type="nucleotide sequence ID" value="NM_001268858.3"/>
</dbReference>
<dbReference type="SMR" id="Q9XUE6"/>
<dbReference type="BioGRID" id="43448">
    <property type="interactions" value="4"/>
</dbReference>
<dbReference type="FunCoup" id="Q9XUE6">
    <property type="interactions" value="2078"/>
</dbReference>
<dbReference type="IntAct" id="Q9XUE6">
    <property type="interactions" value="1"/>
</dbReference>
<dbReference type="STRING" id="6239.F52B11.2a.1"/>
<dbReference type="PaxDb" id="6239-F52B11.2a"/>
<dbReference type="PeptideAtlas" id="Q9XUE6"/>
<dbReference type="EnsemblMetazoa" id="F52B11.2a.1">
    <molecule id="Q9XUE6-1"/>
    <property type="protein sequence ID" value="F52B11.2a.1"/>
    <property type="gene ID" value="WBGene00009925"/>
</dbReference>
<dbReference type="EnsemblMetazoa" id="F52B11.2b.1">
    <molecule id="Q9XUE6-2"/>
    <property type="protein sequence ID" value="F52B11.2b.1"/>
    <property type="gene ID" value="WBGene00009925"/>
</dbReference>
<dbReference type="GeneID" id="178364"/>
<dbReference type="KEGG" id="cel:CELE_F52B11.2"/>
<dbReference type="UCSC" id="F52B11.2">
    <molecule id="Q9XUE6-1"/>
    <property type="organism name" value="c. elegans"/>
</dbReference>
<dbReference type="AGR" id="WB:WBGene00009925"/>
<dbReference type="CTD" id="178364"/>
<dbReference type="WormBase" id="F52B11.2a">
    <molecule id="Q9XUE6-1"/>
    <property type="protein sequence ID" value="CE44567"/>
    <property type="gene ID" value="WBGene00009925"/>
</dbReference>
<dbReference type="WormBase" id="F52B11.2b">
    <molecule id="Q9XUE6-2"/>
    <property type="protein sequence ID" value="CE36163"/>
    <property type="gene ID" value="WBGene00009925"/>
</dbReference>
<dbReference type="eggNOG" id="KOG3189">
    <property type="taxonomic scope" value="Eukaryota"/>
</dbReference>
<dbReference type="GeneTree" id="ENSGT00390000002918"/>
<dbReference type="HOGENOM" id="CLU_065642_0_1_1"/>
<dbReference type="InParanoid" id="Q9XUE6"/>
<dbReference type="OMA" id="ISHRVYT"/>
<dbReference type="OrthoDB" id="10264771at2759"/>
<dbReference type="PhylomeDB" id="Q9XUE6"/>
<dbReference type="Reactome" id="R-CEL-446205">
    <property type="pathway name" value="Synthesis of GDP-mannose"/>
</dbReference>
<dbReference type="UniPathway" id="UPA00126">
    <property type="reaction ID" value="UER00424"/>
</dbReference>
<dbReference type="PRO" id="PR:Q9XUE6"/>
<dbReference type="Proteomes" id="UP000001940">
    <property type="component" value="Chromosome IV"/>
</dbReference>
<dbReference type="Bgee" id="WBGene00009925">
    <property type="expression patterns" value="Expressed in adult organism and 4 other cell types or tissues"/>
</dbReference>
<dbReference type="GO" id="GO:0005829">
    <property type="term" value="C:cytosol"/>
    <property type="evidence" value="ECO:0000318"/>
    <property type="project" value="GO_Central"/>
</dbReference>
<dbReference type="GO" id="GO:0046872">
    <property type="term" value="F:metal ion binding"/>
    <property type="evidence" value="ECO:0007669"/>
    <property type="project" value="UniProtKB-KW"/>
</dbReference>
<dbReference type="GO" id="GO:0004615">
    <property type="term" value="F:phosphomannomutase activity"/>
    <property type="evidence" value="ECO:0000318"/>
    <property type="project" value="GO_Central"/>
</dbReference>
<dbReference type="GO" id="GO:0009298">
    <property type="term" value="P:GDP-mannose biosynthetic process"/>
    <property type="evidence" value="ECO:0007669"/>
    <property type="project" value="UniProtKB-UniPathway"/>
</dbReference>
<dbReference type="GO" id="GO:0036498">
    <property type="term" value="P:IRE1-mediated unfolded protein response"/>
    <property type="evidence" value="ECO:0007007"/>
    <property type="project" value="WormBase"/>
</dbReference>
<dbReference type="GO" id="GO:0006013">
    <property type="term" value="P:mannose metabolic process"/>
    <property type="evidence" value="ECO:0000318"/>
    <property type="project" value="GO_Central"/>
</dbReference>
<dbReference type="GO" id="GO:0006487">
    <property type="term" value="P:protein N-linked glycosylation"/>
    <property type="evidence" value="ECO:0000318"/>
    <property type="project" value="GO_Central"/>
</dbReference>
<dbReference type="CDD" id="cd02585">
    <property type="entry name" value="HAD_PMM"/>
    <property type="match status" value="1"/>
</dbReference>
<dbReference type="FunFam" id="3.30.1240.20:FF:000001">
    <property type="entry name" value="Phosphomannomutase"/>
    <property type="match status" value="1"/>
</dbReference>
<dbReference type="Gene3D" id="3.30.1240.20">
    <property type="match status" value="1"/>
</dbReference>
<dbReference type="Gene3D" id="3.40.50.1000">
    <property type="entry name" value="HAD superfamily/HAD-like"/>
    <property type="match status" value="1"/>
</dbReference>
<dbReference type="InterPro" id="IPR036412">
    <property type="entry name" value="HAD-like_sf"/>
</dbReference>
<dbReference type="InterPro" id="IPR006379">
    <property type="entry name" value="HAD-SF_hydro_IIB"/>
</dbReference>
<dbReference type="InterPro" id="IPR023214">
    <property type="entry name" value="HAD_sf"/>
</dbReference>
<dbReference type="InterPro" id="IPR005002">
    <property type="entry name" value="PMM"/>
</dbReference>
<dbReference type="InterPro" id="IPR043169">
    <property type="entry name" value="PMM_cap"/>
</dbReference>
<dbReference type="NCBIfam" id="TIGR01484">
    <property type="entry name" value="HAD-SF-IIB"/>
    <property type="match status" value="1"/>
</dbReference>
<dbReference type="PANTHER" id="PTHR10466">
    <property type="entry name" value="PHOSPHOMANNOMUTASE"/>
    <property type="match status" value="1"/>
</dbReference>
<dbReference type="PANTHER" id="PTHR10466:SF0">
    <property type="entry name" value="PHOSPHOMANNOMUTASE"/>
    <property type="match status" value="1"/>
</dbReference>
<dbReference type="Pfam" id="PF03332">
    <property type="entry name" value="PMM"/>
    <property type="match status" value="1"/>
</dbReference>
<dbReference type="SFLD" id="SFLDF00445">
    <property type="entry name" value="alpha-phosphomannomutase"/>
    <property type="match status" value="1"/>
</dbReference>
<dbReference type="SFLD" id="SFLDG01140">
    <property type="entry name" value="C2.B:_Phosphomannomutase_and_P"/>
    <property type="match status" value="1"/>
</dbReference>
<dbReference type="SUPFAM" id="SSF56784">
    <property type="entry name" value="HAD-like"/>
    <property type="match status" value="1"/>
</dbReference>
<proteinExistence type="inferred from homology"/>